<name>CTR1_LUMTE</name>
<dbReference type="EC" id="3.4.21.1"/>
<dbReference type="GO" id="GO:0005576">
    <property type="term" value="C:extracellular region"/>
    <property type="evidence" value="ECO:0007669"/>
    <property type="project" value="UniProtKB-SubCell"/>
</dbReference>
<dbReference type="GO" id="GO:0004252">
    <property type="term" value="F:serine-type endopeptidase activity"/>
    <property type="evidence" value="ECO:0007669"/>
    <property type="project" value="UniProtKB-EC"/>
</dbReference>
<dbReference type="GO" id="GO:0006508">
    <property type="term" value="P:proteolysis"/>
    <property type="evidence" value="ECO:0007669"/>
    <property type="project" value="UniProtKB-KW"/>
</dbReference>
<proteinExistence type="evidence at protein level"/>
<organism>
    <name type="scientific">Lumbricus terrestris</name>
    <name type="common">Common earthworm</name>
    <dbReference type="NCBI Taxonomy" id="6398"/>
    <lineage>
        <taxon>Eukaryota</taxon>
        <taxon>Metazoa</taxon>
        <taxon>Spiralia</taxon>
        <taxon>Lophotrochozoa</taxon>
        <taxon>Annelida</taxon>
        <taxon>Clitellata</taxon>
        <taxon>Oligochaeta</taxon>
        <taxon>Crassiclitellata</taxon>
        <taxon>Lumbricina</taxon>
        <taxon>Lumbricidae</taxon>
        <taxon>Lumbricinae</taxon>
        <taxon>Lumbricus</taxon>
    </lineage>
</organism>
<evidence type="ECO:0000250" key="1"/>
<evidence type="ECO:0000255" key="2">
    <source>
        <dbReference type="PROSITE-ProRule" id="PRU00274"/>
    </source>
</evidence>
<evidence type="ECO:0000255" key="3">
    <source>
        <dbReference type="PROSITE-ProRule" id="PRU10078"/>
    </source>
</evidence>
<evidence type="ECO:0000255" key="4">
    <source>
        <dbReference type="PROSITE-ProRule" id="PRU10079"/>
    </source>
</evidence>
<evidence type="ECO:0000269" key="5">
    <source>
    </source>
</evidence>
<evidence type="ECO:0000269" key="6">
    <source ref="1"/>
</evidence>
<evidence type="ECO:0000305" key="7"/>
<reference evidence="7" key="1">
    <citation type="submission" date="2004-11" db="UniProtKB">
        <authorList>
            <person name="Wojtaszek J."/>
            <person name="Wilusz T."/>
        </authorList>
    </citation>
    <scope>PROTEIN SEQUENCE</scope>
    <scope>CATALYTIC ACTIVITY</scope>
    <scope>ACTIVITY REGULATION</scope>
    <scope>SUBUNIT</scope>
    <scope>MASS SPECTROMETRY</scope>
    <source>
        <tissue>Gut</tissue>
    </source>
</reference>
<reference evidence="7" key="2">
    <citation type="journal article" date="2006" name="Comp. Biochem. Physiol.">
        <title>LTCI, a novel chymotrypsin inhibitor of the potato I family from the earthworm Lumbricus terrestris. Purification, cDNA cloning, and expression.</title>
        <authorList>
            <person name="Wojtaszek J."/>
            <person name="Kolaczkowska A."/>
            <person name="Kowalska J."/>
            <person name="Nowak K."/>
            <person name="Wilusz T."/>
        </authorList>
    </citation>
    <scope>ACTIVITY REGULATION</scope>
</reference>
<keyword id="KW-0903">Direct protein sequencing</keyword>
<keyword id="KW-0378">Hydrolase</keyword>
<keyword id="KW-0645">Protease</keyword>
<keyword id="KW-0964">Secreted</keyword>
<keyword id="KW-0720">Serine protease</keyword>
<feature type="chain" id="PRO_0000088688" description="Chymotrypsin LT_CH 1">
    <location>
        <begin position="1"/>
        <end position="19" status="greater than"/>
    </location>
</feature>
<feature type="domain" description="Peptidase S1" evidence="2">
    <location>
        <begin position="1"/>
        <end position="19" status="greater than"/>
    </location>
</feature>
<feature type="non-terminal residue">
    <location>
        <position position="19"/>
    </location>
</feature>
<comment type="catalytic activity">
    <reaction evidence="3 4 6">
        <text>Preferential cleavage: Tyr-|-Xaa, Trp-|-Xaa, Phe-|-Xaa, Leu-|-Xaa.</text>
        <dbReference type="EC" id="3.4.21.1"/>
    </reaction>
</comment>
<comment type="activity regulation">
    <text evidence="5 6">Inhibited by the chymotrypsin inhibitor LTCI.</text>
</comment>
<comment type="subunit">
    <text evidence="6">Monomer.</text>
</comment>
<comment type="subcellular location">
    <subcellularLocation>
        <location evidence="1">Secreted</location>
        <location evidence="1">Extracellular space</location>
    </subcellularLocation>
</comment>
<comment type="mass spectrometry" mass="23126.0" method="Electrospray" evidence="6"/>
<comment type="similarity">
    <text evidence="2">Belongs to the peptidase S1 family.</text>
</comment>
<protein>
    <recommendedName>
        <fullName>Chymotrypsin LT_CH 1</fullName>
        <ecNumber>3.4.21.1</ecNumber>
    </recommendedName>
</protein>
<sequence length="19" mass="2042">VIGGSDTTIGQYPHQLSLR</sequence>
<accession>P84310</accession>